<comment type="function">
    <text evidence="3 4">Citrate transporter critical for aluminum tolerance. Responsible for citrate exudation into the rhizosphere to protect roots from aluminum toxicity.</text>
</comment>
<comment type="subcellular location">
    <subcellularLocation>
        <location evidence="9">Cell membrane</location>
        <topology evidence="9">Multi-pass membrane protein</topology>
    </subcellularLocation>
</comment>
<comment type="alternative products">
    <event type="alternative splicing"/>
    <isoform>
        <id>Q9SYD6-1</id>
        <name>1</name>
        <sequence type="displayed"/>
    </isoform>
    <isoform>
        <id>Q9SYD6-2</id>
        <name>2</name>
        <sequence type="described" ref="VSP_040657"/>
    </isoform>
    <isoform>
        <id>Q9SYD6-3</id>
        <name>3</name>
        <sequence type="described" ref="VSP_057894 VSP_057895"/>
    </isoform>
</comment>
<comment type="tissue specificity">
    <text evidence="3 4">Expressed in roots, but not in shoots (PubMed:18826429, PubMed:22413742). Detected in the mature regions of the root, extending from above the root-hair region to the root-shoot junction (PubMed:22413742).</text>
</comment>
<comment type="induction">
    <text evidence="3 4">Up-regulated by aluminum (PubMed:18826429, PubMed:22413742). The STOP1 transcription factor is required for MATE expression (PubMed:18826429).</text>
</comment>
<comment type="disruption phenotype">
    <text evidence="3">No visible phenotype when grown under normal conditions. Strong reduction of aluminum-activated citrate release and small decrease in aluminum tolerance.</text>
</comment>
<comment type="miscellaneous">
    <text evidence="8">Acts in parallel but independently of ALMT1, an aluminum-activated root malate transporter.</text>
</comment>
<comment type="miscellaneous">
    <molecule>Isoform 3</molecule>
    <text evidence="2">May be due to a competing donor splice site. Aberrant spliced mRNA with a premature translation termination codon (PTC) that could be the target of the NMD degradation pathway.</text>
</comment>
<comment type="similarity">
    <text evidence="9">Belongs to the multi antimicrobial extrusion (MATE) (TC 2.A.66.1) family.</text>
</comment>
<comment type="sequence caution" evidence="9">
    <conflict type="erroneous gene model prediction">
        <sequence resource="EMBL-CDS" id="AAD30646"/>
    </conflict>
</comment>
<protein>
    <recommendedName>
        <fullName evidence="5">Protein DETOXIFICATION 42</fullName>
        <shortName evidence="5">AtDTX42</shortName>
    </recommendedName>
    <alternativeName>
        <fullName evidence="8">Aluminum-activated citrate transporter</fullName>
    </alternativeName>
    <alternativeName>
        <fullName evidence="8">AtMATE</fullName>
    </alternativeName>
    <alternativeName>
        <fullName evidence="6">FRD-like protein</fullName>
    </alternativeName>
    <alternativeName>
        <fullName evidence="9">Multidrug and toxic compound extrusion protein 42</fullName>
        <shortName evidence="9">MATE protein 42</shortName>
    </alternativeName>
</protein>
<organism>
    <name type="scientific">Arabidopsis thaliana</name>
    <name type="common">Mouse-ear cress</name>
    <dbReference type="NCBI Taxonomy" id="3702"/>
    <lineage>
        <taxon>Eukaryota</taxon>
        <taxon>Viridiplantae</taxon>
        <taxon>Streptophyta</taxon>
        <taxon>Embryophyta</taxon>
        <taxon>Tracheophyta</taxon>
        <taxon>Spermatophyta</taxon>
        <taxon>Magnoliopsida</taxon>
        <taxon>eudicotyledons</taxon>
        <taxon>Gunneridae</taxon>
        <taxon>Pentapetalae</taxon>
        <taxon>rosids</taxon>
        <taxon>malvids</taxon>
        <taxon>Brassicales</taxon>
        <taxon>Brassicaceae</taxon>
        <taxon>Camelineae</taxon>
        <taxon>Arabidopsis</taxon>
    </lineage>
</organism>
<reference key="1">
    <citation type="journal article" date="2000" name="Nature">
        <title>Sequence and analysis of chromosome 1 of the plant Arabidopsis thaliana.</title>
        <authorList>
            <person name="Theologis A."/>
            <person name="Ecker J.R."/>
            <person name="Palm C.J."/>
            <person name="Federspiel N.A."/>
            <person name="Kaul S."/>
            <person name="White O."/>
            <person name="Alonso J."/>
            <person name="Altafi H."/>
            <person name="Araujo R."/>
            <person name="Bowman C.L."/>
            <person name="Brooks S.Y."/>
            <person name="Buehler E."/>
            <person name="Chan A."/>
            <person name="Chao Q."/>
            <person name="Chen H."/>
            <person name="Cheuk R.F."/>
            <person name="Chin C.W."/>
            <person name="Chung M.K."/>
            <person name="Conn L."/>
            <person name="Conway A.B."/>
            <person name="Conway A.R."/>
            <person name="Creasy T.H."/>
            <person name="Dewar K."/>
            <person name="Dunn P."/>
            <person name="Etgu P."/>
            <person name="Feldblyum T.V."/>
            <person name="Feng J.-D."/>
            <person name="Fong B."/>
            <person name="Fujii C.Y."/>
            <person name="Gill J.E."/>
            <person name="Goldsmith A.D."/>
            <person name="Haas B."/>
            <person name="Hansen N.F."/>
            <person name="Hughes B."/>
            <person name="Huizar L."/>
            <person name="Hunter J.L."/>
            <person name="Jenkins J."/>
            <person name="Johnson-Hopson C."/>
            <person name="Khan S."/>
            <person name="Khaykin E."/>
            <person name="Kim C.J."/>
            <person name="Koo H.L."/>
            <person name="Kremenetskaia I."/>
            <person name="Kurtz D.B."/>
            <person name="Kwan A."/>
            <person name="Lam B."/>
            <person name="Langin-Hooper S."/>
            <person name="Lee A."/>
            <person name="Lee J.M."/>
            <person name="Lenz C.A."/>
            <person name="Li J.H."/>
            <person name="Li Y.-P."/>
            <person name="Lin X."/>
            <person name="Liu S.X."/>
            <person name="Liu Z.A."/>
            <person name="Luros J.S."/>
            <person name="Maiti R."/>
            <person name="Marziali A."/>
            <person name="Militscher J."/>
            <person name="Miranda M."/>
            <person name="Nguyen M."/>
            <person name="Nierman W.C."/>
            <person name="Osborne B.I."/>
            <person name="Pai G."/>
            <person name="Peterson J."/>
            <person name="Pham P.K."/>
            <person name="Rizzo M."/>
            <person name="Rooney T."/>
            <person name="Rowley D."/>
            <person name="Sakano H."/>
            <person name="Salzberg S.L."/>
            <person name="Schwartz J.R."/>
            <person name="Shinn P."/>
            <person name="Southwick A.M."/>
            <person name="Sun H."/>
            <person name="Tallon L.J."/>
            <person name="Tambunga G."/>
            <person name="Toriumi M.J."/>
            <person name="Town C.D."/>
            <person name="Utterback T."/>
            <person name="Van Aken S."/>
            <person name="Vaysberg M."/>
            <person name="Vysotskaia V.S."/>
            <person name="Walker M."/>
            <person name="Wu D."/>
            <person name="Yu G."/>
            <person name="Fraser C.M."/>
            <person name="Venter J.C."/>
            <person name="Davis R.W."/>
        </authorList>
    </citation>
    <scope>NUCLEOTIDE SEQUENCE [LARGE SCALE GENOMIC DNA]</scope>
    <source>
        <strain>cv. Columbia</strain>
    </source>
</reference>
<reference key="2">
    <citation type="journal article" date="2017" name="Plant J.">
        <title>Araport11: a complete reannotation of the Arabidopsis thaliana reference genome.</title>
        <authorList>
            <person name="Cheng C.Y."/>
            <person name="Krishnakumar V."/>
            <person name="Chan A.P."/>
            <person name="Thibaud-Nissen F."/>
            <person name="Schobel S."/>
            <person name="Town C.D."/>
        </authorList>
    </citation>
    <scope>GENOME REANNOTATION</scope>
    <source>
        <strain>cv. Columbia</strain>
    </source>
</reference>
<reference key="3">
    <citation type="journal article" date="2003" name="Science">
        <title>Empirical analysis of transcriptional activity in the Arabidopsis genome.</title>
        <authorList>
            <person name="Yamada K."/>
            <person name="Lim J."/>
            <person name="Dale J.M."/>
            <person name="Chen H."/>
            <person name="Shinn P."/>
            <person name="Palm C.J."/>
            <person name="Southwick A.M."/>
            <person name="Wu H.C."/>
            <person name="Kim C.J."/>
            <person name="Nguyen M."/>
            <person name="Pham P.K."/>
            <person name="Cheuk R.F."/>
            <person name="Karlin-Newmann G."/>
            <person name="Liu S.X."/>
            <person name="Lam B."/>
            <person name="Sakano H."/>
            <person name="Wu T."/>
            <person name="Yu G."/>
            <person name="Miranda M."/>
            <person name="Quach H.L."/>
            <person name="Tripp M."/>
            <person name="Chang C.H."/>
            <person name="Lee J.M."/>
            <person name="Toriumi M.J."/>
            <person name="Chan M.M."/>
            <person name="Tang C.C."/>
            <person name="Onodera C.S."/>
            <person name="Deng J.M."/>
            <person name="Akiyama K."/>
            <person name="Ansari Y."/>
            <person name="Arakawa T."/>
            <person name="Banh J."/>
            <person name="Banno F."/>
            <person name="Bowser L."/>
            <person name="Brooks S.Y."/>
            <person name="Carninci P."/>
            <person name="Chao Q."/>
            <person name="Choy N."/>
            <person name="Enju A."/>
            <person name="Goldsmith A.D."/>
            <person name="Gurjal M."/>
            <person name="Hansen N.F."/>
            <person name="Hayashizaki Y."/>
            <person name="Johnson-Hopson C."/>
            <person name="Hsuan V.W."/>
            <person name="Iida K."/>
            <person name="Karnes M."/>
            <person name="Khan S."/>
            <person name="Koesema E."/>
            <person name="Ishida J."/>
            <person name="Jiang P.X."/>
            <person name="Jones T."/>
            <person name="Kawai J."/>
            <person name="Kamiya A."/>
            <person name="Meyers C."/>
            <person name="Nakajima M."/>
            <person name="Narusaka M."/>
            <person name="Seki M."/>
            <person name="Sakurai T."/>
            <person name="Satou M."/>
            <person name="Tamse R."/>
            <person name="Vaysberg M."/>
            <person name="Wallender E.K."/>
            <person name="Wong C."/>
            <person name="Yamamura Y."/>
            <person name="Yuan S."/>
            <person name="Shinozaki K."/>
            <person name="Davis R.W."/>
            <person name="Theologis A."/>
            <person name="Ecker J.R."/>
        </authorList>
    </citation>
    <scope>NUCLEOTIDE SEQUENCE [LARGE SCALE MRNA] (ISOFORM 3)</scope>
    <source>
        <strain>cv. Columbia</strain>
    </source>
</reference>
<reference key="4">
    <citation type="journal article" date="2004" name="Genome Res.">
        <title>Whole genome sequence comparisons and 'full-length' cDNA sequences: a combined approach to evaluate and improve Arabidopsis genome annotation.</title>
        <authorList>
            <person name="Castelli V."/>
            <person name="Aury J.-M."/>
            <person name="Jaillon O."/>
            <person name="Wincker P."/>
            <person name="Clepet C."/>
            <person name="Menard M."/>
            <person name="Cruaud C."/>
            <person name="Quetier F."/>
            <person name="Scarpelli C."/>
            <person name="Schaechter V."/>
            <person name="Temple G."/>
            <person name="Caboche M."/>
            <person name="Weissenbach J."/>
            <person name="Salanoubat M."/>
        </authorList>
    </citation>
    <scope>NUCLEOTIDE SEQUENCE [LARGE SCALE MRNA] (ISOFORM 2)</scope>
    <source>
        <strain>cv. Columbia</strain>
    </source>
</reference>
<reference key="5">
    <citation type="journal article" date="2002" name="J. Biol. Chem.">
        <title>Functional cloning and characterization of a plant efflux carrier for multidrug and heavy metal detoxification.</title>
        <authorList>
            <person name="Li L."/>
            <person name="He Z."/>
            <person name="Pandey G.K."/>
            <person name="Tsuchiya T."/>
            <person name="Luan S."/>
        </authorList>
    </citation>
    <scope>GENE FAMILY</scope>
    <scope>NOMENCLATURE</scope>
</reference>
<reference key="6">
    <citation type="journal article" date="2002" name="Plant Cell">
        <title>FRD3, a member of the multidrug and toxin efflux family, controls iron deficiency responses in Arabidopsis.</title>
        <authorList>
            <person name="Rogers E.E."/>
            <person name="Guerinot M.L."/>
        </authorList>
    </citation>
    <scope>IDENTIFICATION</scope>
    <source>
        <strain>cv. Columbia</strain>
    </source>
</reference>
<reference key="7">
    <citation type="journal article" date="2003" name="Eur. J. Biochem.">
        <title>The multidrug/oligosaccharidyl-lipid/polysaccharide (MOP) exporter superfamily.</title>
        <authorList>
            <person name="Hvorup R.N."/>
            <person name="Winnen B."/>
            <person name="Chang A.B."/>
            <person name="Jiang Y."/>
            <person name="Zhou X.F."/>
            <person name="Saier M.H. Jr."/>
        </authorList>
    </citation>
    <scope>GENE FAMILY</scope>
</reference>
<reference key="8">
    <citation type="journal article" date="2005" name="Plant J.">
        <title>UPF3 suppresses aberrant spliced mRNA in Arabidopsis.</title>
        <authorList>
            <person name="Hori K."/>
            <person name="Watanabe Y."/>
        </authorList>
    </citation>
    <scope>ALTERNATIVE SPLICING</scope>
</reference>
<reference key="9">
    <citation type="journal article" date="2009" name="Plant J.">
        <title>Aluminum-activated citrate and malate transporters from the MATE and ALMT families function independently to confer Arabidopsis aluminum tolerance.</title>
        <authorList>
            <person name="Liu J."/>
            <person name="Magalhaes J.V."/>
            <person name="Shaff J."/>
            <person name="Kochian L.V."/>
        </authorList>
    </citation>
    <scope>FUNCTION</scope>
    <scope>TISSUE SPECIFICITY</scope>
    <scope>INDUCTION BY ALUMINUM</scope>
    <scope>DISRUPTION PHENOTYPE</scope>
</reference>
<reference key="10">
    <citation type="journal article" date="2012" name="Plant J.">
        <title>A promoter-swap strategy between the AtALMT and AtMATE genes increased Arabidopsis aluminum resistance and improved carbon-use efficiency for aluminum resistance.</title>
        <authorList>
            <person name="Liu J."/>
            <person name="Luo X."/>
            <person name="Shaff J."/>
            <person name="Liang C."/>
            <person name="Jia X."/>
            <person name="Li Z."/>
            <person name="Magalhaes J."/>
            <person name="Kochian L.V."/>
        </authorList>
    </citation>
    <scope>INDUCTION BY ALUMINUM</scope>
    <scope>TISSUE SPECIFICITY</scope>
    <scope>FUNCTION</scope>
</reference>
<gene>
    <name evidence="5" type="primary">DTX42</name>
    <name evidence="6" type="synonym">FRDL</name>
    <name evidence="8" type="synonym">MATE</name>
    <name evidence="10" type="ordered locus">At1g51340</name>
    <name evidence="11" type="ORF">F11M15.20</name>
</gene>
<sequence length="515" mass="55374">MMSEDGYNTDFPRNPLYIFFSDFRSVLKFDELGLEIARIALPAALALTADPIASLVDTAFIGQIGPVELAAVGVSIALFNQVSRIAIFPLVSITTSFVAEEDACSSQQDTVRDHKECIEIGINNPTEETIELIPEKHKDSLSDEFKTSSSIFSISKPPAKKRNIPSASSALIIGGVLGLFQAVFLISAAKPLLSFMGVKHDSPMMRPSQRYLSLRSLGAPAVLLSLAAQGVFRGFKDTTTPLFATVIGDVTNIILDPIFIFVFRLGVTGAATAHVISQYLMCGILLWKLMGQVDIFNMSTKHLQFCRFMKNGFLLLMRVIAVTFCVTLSASLAAREGSTSMAAFQVCLQVWLATSLLADGYAVAGQAILASAFAKKDYKRAAATASRVLQLGLVLGFVLAVILGAGLHFGARVFTKDDKVLHLISIGLPFVAGTQPINALAFVFDGVNFGASDFGYAAASLVMVAIVSILCLLFLSSTHGFIGLWFGLTIYMSLRAAVGFWRIGTGTGPWSFLRS</sequence>
<feature type="chain" id="PRO_0000405271" description="Protein DETOXIFICATION 42">
    <location>
        <begin position="1"/>
        <end position="515"/>
    </location>
</feature>
<feature type="topological domain" description="Cytoplasmic" evidence="1">
    <location>
        <begin position="1"/>
        <end position="35"/>
    </location>
</feature>
<feature type="transmembrane region" description="Helical" evidence="1">
    <location>
        <begin position="36"/>
        <end position="56"/>
    </location>
</feature>
<feature type="topological domain" description="Extracellular" evidence="1">
    <location>
        <begin position="57"/>
        <end position="58"/>
    </location>
</feature>
<feature type="transmembrane region" description="Helical" evidence="1">
    <location>
        <begin position="59"/>
        <end position="79"/>
    </location>
</feature>
<feature type="topological domain" description="Cytoplasmic" evidence="1">
    <location>
        <begin position="80"/>
        <end position="168"/>
    </location>
</feature>
<feature type="transmembrane region" description="Helical" evidence="1">
    <location>
        <begin position="169"/>
        <end position="189"/>
    </location>
</feature>
<feature type="topological domain" description="Extracellular" evidence="1">
    <location>
        <begin position="190"/>
        <end position="211"/>
    </location>
</feature>
<feature type="transmembrane region" description="Helical" evidence="1">
    <location>
        <begin position="212"/>
        <end position="232"/>
    </location>
</feature>
<feature type="topological domain" description="Cytoplasmic" evidence="1">
    <location>
        <begin position="233"/>
        <end position="242"/>
    </location>
</feature>
<feature type="transmembrane region" description="Helical" evidence="1">
    <location>
        <begin position="243"/>
        <end position="263"/>
    </location>
</feature>
<feature type="topological domain" description="Extracellular" evidence="1">
    <location>
        <begin position="264"/>
        <end position="266"/>
    </location>
</feature>
<feature type="transmembrane region" description="Helical" evidence="1">
    <location>
        <begin position="267"/>
        <end position="287"/>
    </location>
</feature>
<feature type="topological domain" description="Cytoplasmic" evidence="1">
    <location>
        <begin position="288"/>
        <end position="312"/>
    </location>
</feature>
<feature type="transmembrane region" description="Helical" evidence="1">
    <location>
        <begin position="313"/>
        <end position="333"/>
    </location>
</feature>
<feature type="topological domain" description="Extracellular" evidence="1">
    <location>
        <begin position="334"/>
        <end position="349"/>
    </location>
</feature>
<feature type="transmembrane region" description="Helical" evidence="1">
    <location>
        <begin position="350"/>
        <end position="370"/>
    </location>
</feature>
<feature type="topological domain" description="Cytoplasmic" evidence="1">
    <location>
        <begin position="371"/>
        <end position="390"/>
    </location>
</feature>
<feature type="transmembrane region" description="Helical" evidence="1">
    <location>
        <begin position="391"/>
        <end position="411"/>
    </location>
</feature>
<feature type="topological domain" description="Extracellular" evidence="1">
    <location>
        <begin position="412"/>
        <end position="423"/>
    </location>
</feature>
<feature type="transmembrane region" description="Helical" evidence="1">
    <location>
        <begin position="424"/>
        <end position="444"/>
    </location>
</feature>
<feature type="topological domain" description="Cytoplasmic" evidence="1">
    <location>
        <begin position="445"/>
        <end position="453"/>
    </location>
</feature>
<feature type="transmembrane region" description="Helical" evidence="1">
    <location>
        <begin position="454"/>
        <end position="474"/>
    </location>
</feature>
<feature type="topological domain" description="Extracellular" evidence="1">
    <location>
        <begin position="475"/>
        <end position="480"/>
    </location>
</feature>
<feature type="transmembrane region" description="Helical" evidence="1">
    <location>
        <begin position="481"/>
        <end position="501"/>
    </location>
</feature>
<feature type="topological domain" description="Cytoplasmic" evidence="1">
    <location>
        <begin position="502"/>
        <end position="515"/>
    </location>
</feature>
<feature type="splice variant" id="VSP_040657" description="In isoform 2." evidence="7">
    <original>MMSEDGYNTDFPRNPLYIFFSDFR</original>
    <variation>MATTQIFQETLYTFSLVI</variation>
    <location>
        <begin position="1"/>
        <end position="24"/>
    </location>
</feature>
<feature type="splice variant" id="VSP_057894" description="In isoform 3.">
    <original>YA</original>
    <variation>QY</variation>
    <location>
        <begin position="361"/>
        <end position="362"/>
    </location>
</feature>
<feature type="splice variant" id="VSP_057895" description="In isoform 3.">
    <location>
        <begin position="363"/>
        <end position="515"/>
    </location>
</feature>
<keyword id="KW-0025">Alternative splicing</keyword>
<keyword id="KW-1003">Cell membrane</keyword>
<keyword id="KW-0407">Ion channel</keyword>
<keyword id="KW-0406">Ion transport</keyword>
<keyword id="KW-0472">Membrane</keyword>
<keyword id="KW-1185">Reference proteome</keyword>
<keyword id="KW-0812">Transmembrane</keyword>
<keyword id="KW-1133">Transmembrane helix</keyword>
<keyword id="KW-0813">Transport</keyword>
<accession>Q9SYD6</accession>
<accession>Q3ECS6</accession>
<name>DTX42_ARATH</name>
<proteinExistence type="evidence at transcript level"/>
<evidence type="ECO:0000255" key="1"/>
<evidence type="ECO:0000269" key="2">
    <source>
    </source>
</evidence>
<evidence type="ECO:0000269" key="3">
    <source>
    </source>
</evidence>
<evidence type="ECO:0000269" key="4">
    <source>
    </source>
</evidence>
<evidence type="ECO:0000303" key="5">
    <source>
    </source>
</evidence>
<evidence type="ECO:0000303" key="6">
    <source>
    </source>
</evidence>
<evidence type="ECO:0000303" key="7">
    <source>
    </source>
</evidence>
<evidence type="ECO:0000303" key="8">
    <source>
    </source>
</evidence>
<evidence type="ECO:0000305" key="9"/>
<evidence type="ECO:0000312" key="10">
    <source>
        <dbReference type="Araport" id="AT1G51340"/>
    </source>
</evidence>
<evidence type="ECO:0000312" key="11">
    <source>
        <dbReference type="EMBL" id="AAD30646.1"/>
    </source>
</evidence>
<dbReference type="EMBL" id="AC006085">
    <property type="protein sequence ID" value="AAD30646.1"/>
    <property type="status" value="ALT_SEQ"/>
    <property type="molecule type" value="Genomic_DNA"/>
</dbReference>
<dbReference type="EMBL" id="CP002684">
    <property type="protein sequence ID" value="AEE32652.1"/>
    <property type="molecule type" value="Genomic_DNA"/>
</dbReference>
<dbReference type="EMBL" id="CP002684">
    <property type="protein sequence ID" value="AEE32653.1"/>
    <property type="molecule type" value="Genomic_DNA"/>
</dbReference>
<dbReference type="EMBL" id="CP002684">
    <property type="protein sequence ID" value="ANM60202.1"/>
    <property type="molecule type" value="Genomic_DNA"/>
</dbReference>
<dbReference type="EMBL" id="CP002684">
    <property type="protein sequence ID" value="ANM60203.1"/>
    <property type="molecule type" value="Genomic_DNA"/>
</dbReference>
<dbReference type="EMBL" id="AY059793">
    <property type="status" value="NOT_ANNOTATED_CDS"/>
    <property type="molecule type" value="mRNA"/>
</dbReference>
<dbReference type="EMBL" id="BX818238">
    <property type="status" value="NOT_ANNOTATED_CDS"/>
    <property type="molecule type" value="mRNA"/>
</dbReference>
<dbReference type="PIR" id="D96551">
    <property type="entry name" value="D96551"/>
</dbReference>
<dbReference type="RefSeq" id="NP_001319195.1">
    <molecule id="Q9SYD6-1"/>
    <property type="nucleotide sequence ID" value="NM_001333481.1"/>
</dbReference>
<dbReference type="RefSeq" id="NP_001322504.1">
    <molecule id="Q9SYD6-1"/>
    <property type="nucleotide sequence ID" value="NM_001333482.1"/>
</dbReference>
<dbReference type="RefSeq" id="NP_564588.2">
    <molecule id="Q9SYD6-2"/>
    <property type="nucleotide sequence ID" value="NM_104012.3"/>
</dbReference>
<dbReference type="RefSeq" id="NP_974000.1">
    <molecule id="Q9SYD6-1"/>
    <property type="nucleotide sequence ID" value="NM_202271.2"/>
</dbReference>
<dbReference type="SMR" id="Q9SYD6"/>
<dbReference type="BioGRID" id="26782">
    <property type="interactions" value="1"/>
</dbReference>
<dbReference type="STRING" id="3702.Q9SYD6"/>
<dbReference type="PaxDb" id="3702-AT1G51340.2"/>
<dbReference type="EnsemblPlants" id="AT1G51340.1">
    <molecule id="Q9SYD6-2"/>
    <property type="protein sequence ID" value="AT1G51340.1"/>
    <property type="gene ID" value="AT1G51340"/>
</dbReference>
<dbReference type="EnsemblPlants" id="AT1G51340.2">
    <molecule id="Q9SYD6-1"/>
    <property type="protein sequence ID" value="AT1G51340.2"/>
    <property type="gene ID" value="AT1G51340"/>
</dbReference>
<dbReference type="EnsemblPlants" id="AT1G51340.3">
    <molecule id="Q9SYD6-1"/>
    <property type="protein sequence ID" value="AT1G51340.3"/>
    <property type="gene ID" value="AT1G51340"/>
</dbReference>
<dbReference type="EnsemblPlants" id="AT1G51340.5">
    <molecule id="Q9SYD6-1"/>
    <property type="protein sequence ID" value="AT1G51340.5"/>
    <property type="gene ID" value="AT1G51340"/>
</dbReference>
<dbReference type="GeneID" id="841557"/>
<dbReference type="Gramene" id="AT1G51340.1">
    <molecule id="Q9SYD6-2"/>
    <property type="protein sequence ID" value="AT1G51340.1"/>
    <property type="gene ID" value="AT1G51340"/>
</dbReference>
<dbReference type="Gramene" id="AT1G51340.2">
    <molecule id="Q9SYD6-1"/>
    <property type="protein sequence ID" value="AT1G51340.2"/>
    <property type="gene ID" value="AT1G51340"/>
</dbReference>
<dbReference type="Gramene" id="AT1G51340.3">
    <molecule id="Q9SYD6-1"/>
    <property type="protein sequence ID" value="AT1G51340.3"/>
    <property type="gene ID" value="AT1G51340"/>
</dbReference>
<dbReference type="Gramene" id="AT1G51340.5">
    <molecule id="Q9SYD6-1"/>
    <property type="protein sequence ID" value="AT1G51340.5"/>
    <property type="gene ID" value="AT1G51340"/>
</dbReference>
<dbReference type="KEGG" id="ath:AT1G51340"/>
<dbReference type="Araport" id="AT1G51340"/>
<dbReference type="TAIR" id="AT1G51340">
    <property type="gene designation" value="MATE"/>
</dbReference>
<dbReference type="eggNOG" id="KOG1347">
    <property type="taxonomic scope" value="Eukaryota"/>
</dbReference>
<dbReference type="HOGENOM" id="CLU_012893_16_2_1"/>
<dbReference type="InParanoid" id="Q9SYD6"/>
<dbReference type="OMA" id="MDGIWLA"/>
<dbReference type="PhylomeDB" id="Q9SYD6"/>
<dbReference type="PRO" id="PR:Q9SYD6"/>
<dbReference type="Proteomes" id="UP000006548">
    <property type="component" value="Chromosome 1"/>
</dbReference>
<dbReference type="ExpressionAtlas" id="Q9SYD6">
    <property type="expression patterns" value="baseline and differential"/>
</dbReference>
<dbReference type="GO" id="GO:0005886">
    <property type="term" value="C:plasma membrane"/>
    <property type="evidence" value="ECO:0007669"/>
    <property type="project" value="UniProtKB-SubCell"/>
</dbReference>
<dbReference type="GO" id="GO:0035618">
    <property type="term" value="C:root hair"/>
    <property type="evidence" value="ECO:0000314"/>
    <property type="project" value="TAIR"/>
</dbReference>
<dbReference type="GO" id="GO:0015297">
    <property type="term" value="F:antiporter activity"/>
    <property type="evidence" value="ECO:0007669"/>
    <property type="project" value="InterPro"/>
</dbReference>
<dbReference type="GO" id="GO:0015137">
    <property type="term" value="F:citrate transmembrane transporter activity"/>
    <property type="evidence" value="ECO:0000315"/>
    <property type="project" value="UniProtKB"/>
</dbReference>
<dbReference type="GO" id="GO:0042910">
    <property type="term" value="F:xenobiotic transmembrane transporter activity"/>
    <property type="evidence" value="ECO:0007669"/>
    <property type="project" value="InterPro"/>
</dbReference>
<dbReference type="GO" id="GO:0015746">
    <property type="term" value="P:citrate transport"/>
    <property type="evidence" value="ECO:0000315"/>
    <property type="project" value="UniProtKB"/>
</dbReference>
<dbReference type="GO" id="GO:0034220">
    <property type="term" value="P:monoatomic ion transmembrane transport"/>
    <property type="evidence" value="ECO:0007669"/>
    <property type="project" value="UniProtKB-KW"/>
</dbReference>
<dbReference type="GO" id="GO:0010044">
    <property type="term" value="P:response to aluminum ion"/>
    <property type="evidence" value="ECO:0000270"/>
    <property type="project" value="UniProtKB"/>
</dbReference>
<dbReference type="CDD" id="cd13136">
    <property type="entry name" value="MATE_DinF_like"/>
    <property type="match status" value="1"/>
</dbReference>
<dbReference type="InterPro" id="IPR044644">
    <property type="entry name" value="DinF-like"/>
</dbReference>
<dbReference type="InterPro" id="IPR002528">
    <property type="entry name" value="MATE_fam"/>
</dbReference>
<dbReference type="NCBIfam" id="TIGR00797">
    <property type="entry name" value="matE"/>
    <property type="match status" value="1"/>
</dbReference>
<dbReference type="PANTHER" id="PTHR42893:SF4">
    <property type="entry name" value="PROTEIN DETOXIFICATION 42"/>
    <property type="match status" value="1"/>
</dbReference>
<dbReference type="PANTHER" id="PTHR42893">
    <property type="entry name" value="PROTEIN DETOXIFICATION 44, CHLOROPLASTIC-RELATED"/>
    <property type="match status" value="1"/>
</dbReference>
<dbReference type="Pfam" id="PF01554">
    <property type="entry name" value="MatE"/>
    <property type="match status" value="2"/>
</dbReference>